<protein>
    <recommendedName>
        <fullName evidence="1">Small ribosomal subunit protein uS10</fullName>
    </recommendedName>
    <alternativeName>
        <fullName evidence="2">30S ribosomal protein S10</fullName>
    </alternativeName>
</protein>
<evidence type="ECO:0000255" key="1">
    <source>
        <dbReference type="HAMAP-Rule" id="MF_00508"/>
    </source>
</evidence>
<evidence type="ECO:0000305" key="2"/>
<comment type="function">
    <text evidence="1">Involved in the binding of tRNA to the ribosomes.</text>
</comment>
<comment type="subunit">
    <text evidence="1">Part of the 30S ribosomal subunit.</text>
</comment>
<comment type="similarity">
    <text evidence="1">Belongs to the universal ribosomal protein uS10 family.</text>
</comment>
<dbReference type="EMBL" id="CP001403">
    <property type="protein sequence ID" value="ACP46252.1"/>
    <property type="molecule type" value="Genomic_DNA"/>
</dbReference>
<dbReference type="SMR" id="C3N7Q8"/>
<dbReference type="KEGG" id="siy:YG5714_1996"/>
<dbReference type="HOGENOM" id="CLU_122625_0_1_2"/>
<dbReference type="Proteomes" id="UP000002308">
    <property type="component" value="Chromosome"/>
</dbReference>
<dbReference type="GO" id="GO:0015935">
    <property type="term" value="C:small ribosomal subunit"/>
    <property type="evidence" value="ECO:0007669"/>
    <property type="project" value="InterPro"/>
</dbReference>
<dbReference type="GO" id="GO:0003735">
    <property type="term" value="F:structural constituent of ribosome"/>
    <property type="evidence" value="ECO:0007669"/>
    <property type="project" value="InterPro"/>
</dbReference>
<dbReference type="GO" id="GO:0000049">
    <property type="term" value="F:tRNA binding"/>
    <property type="evidence" value="ECO:0007669"/>
    <property type="project" value="UniProtKB-UniRule"/>
</dbReference>
<dbReference type="GO" id="GO:0006412">
    <property type="term" value="P:translation"/>
    <property type="evidence" value="ECO:0007669"/>
    <property type="project" value="UniProtKB-UniRule"/>
</dbReference>
<dbReference type="FunFam" id="3.30.70.600:FF:000004">
    <property type="entry name" value="30S ribosomal protein S10"/>
    <property type="match status" value="1"/>
</dbReference>
<dbReference type="Gene3D" id="3.30.70.600">
    <property type="entry name" value="Ribosomal protein S10 domain"/>
    <property type="match status" value="1"/>
</dbReference>
<dbReference type="HAMAP" id="MF_00508">
    <property type="entry name" value="Ribosomal_uS10"/>
    <property type="match status" value="1"/>
</dbReference>
<dbReference type="InterPro" id="IPR001848">
    <property type="entry name" value="Ribosomal_uS10"/>
</dbReference>
<dbReference type="InterPro" id="IPR018268">
    <property type="entry name" value="Ribosomal_uS10_CS"/>
</dbReference>
<dbReference type="InterPro" id="IPR027486">
    <property type="entry name" value="Ribosomal_uS10_dom"/>
</dbReference>
<dbReference type="InterPro" id="IPR036838">
    <property type="entry name" value="Ribosomal_uS10_dom_sf"/>
</dbReference>
<dbReference type="InterPro" id="IPR005729">
    <property type="entry name" value="Ribosomal_uS10_euk/arc"/>
</dbReference>
<dbReference type="NCBIfam" id="TIGR01046">
    <property type="entry name" value="uS10_euk_arch"/>
    <property type="match status" value="1"/>
</dbReference>
<dbReference type="PANTHER" id="PTHR11700">
    <property type="entry name" value="30S RIBOSOMAL PROTEIN S10 FAMILY MEMBER"/>
    <property type="match status" value="1"/>
</dbReference>
<dbReference type="Pfam" id="PF00338">
    <property type="entry name" value="Ribosomal_S10"/>
    <property type="match status" value="1"/>
</dbReference>
<dbReference type="PRINTS" id="PR00971">
    <property type="entry name" value="RIBOSOMALS10"/>
</dbReference>
<dbReference type="SMART" id="SM01403">
    <property type="entry name" value="Ribosomal_S10"/>
    <property type="match status" value="1"/>
</dbReference>
<dbReference type="SUPFAM" id="SSF54999">
    <property type="entry name" value="Ribosomal protein S10"/>
    <property type="match status" value="1"/>
</dbReference>
<dbReference type="PROSITE" id="PS00361">
    <property type="entry name" value="RIBOSOMAL_S10"/>
    <property type="match status" value="1"/>
</dbReference>
<keyword id="KW-0687">Ribonucleoprotein</keyword>
<keyword id="KW-0689">Ribosomal protein</keyword>
<gene>
    <name evidence="1" type="primary">rps10</name>
    <name type="ordered locus">YG5714_1996</name>
</gene>
<proteinExistence type="inferred from homology"/>
<sequence>MPTKARIRLWSTNVENLNYVITQIRGIVEKTGIEMRGPIPLPTSKLEVPIMRLPHGEGRKKWEKWEMRVHKRLIDIAADERVMRQLMRVRVPEDVYIEIQLI</sequence>
<feature type="chain" id="PRO_1000206603" description="Small ribosomal subunit protein uS10">
    <location>
        <begin position="1"/>
        <end position="102"/>
    </location>
</feature>
<organism>
    <name type="scientific">Saccharolobus islandicus (strain Y.G.57.14 / Yellowstone #1)</name>
    <name type="common">Sulfolobus islandicus</name>
    <dbReference type="NCBI Taxonomy" id="439386"/>
    <lineage>
        <taxon>Archaea</taxon>
        <taxon>Thermoproteota</taxon>
        <taxon>Thermoprotei</taxon>
        <taxon>Sulfolobales</taxon>
        <taxon>Sulfolobaceae</taxon>
        <taxon>Saccharolobus</taxon>
    </lineage>
</organism>
<accession>C3N7Q8</accession>
<name>RS10_SACI7</name>
<reference key="1">
    <citation type="journal article" date="2009" name="Proc. Natl. Acad. Sci. U.S.A.">
        <title>Biogeography of the Sulfolobus islandicus pan-genome.</title>
        <authorList>
            <person name="Reno M.L."/>
            <person name="Held N.L."/>
            <person name="Fields C.J."/>
            <person name="Burke P.V."/>
            <person name="Whitaker R.J."/>
        </authorList>
    </citation>
    <scope>NUCLEOTIDE SEQUENCE [LARGE SCALE GENOMIC DNA]</scope>
    <source>
        <strain>Y.G.57.14 / Yellowstone #1</strain>
    </source>
</reference>